<dbReference type="EC" id="2.4.2.22" evidence="1"/>
<dbReference type="EMBL" id="AL596170">
    <property type="protein sequence ID" value="CAC97228.1"/>
    <property type="molecule type" value="Genomic_DNA"/>
</dbReference>
<dbReference type="PIR" id="AD1682">
    <property type="entry name" value="AD1682"/>
</dbReference>
<dbReference type="RefSeq" id="WP_010991698.1">
    <property type="nucleotide sequence ID" value="NC_003212.1"/>
</dbReference>
<dbReference type="SMR" id="Q92AC4"/>
<dbReference type="STRING" id="272626.gene:17566356"/>
<dbReference type="GeneID" id="93235336"/>
<dbReference type="KEGG" id="lin:lin1998"/>
<dbReference type="eggNOG" id="COG0503">
    <property type="taxonomic scope" value="Bacteria"/>
</dbReference>
<dbReference type="HOGENOM" id="CLU_099015_0_0_9"/>
<dbReference type="OrthoDB" id="9790678at2"/>
<dbReference type="UniPathway" id="UPA00602">
    <property type="reaction ID" value="UER00658"/>
</dbReference>
<dbReference type="Proteomes" id="UP000002513">
    <property type="component" value="Chromosome"/>
</dbReference>
<dbReference type="GO" id="GO:0005737">
    <property type="term" value="C:cytoplasm"/>
    <property type="evidence" value="ECO:0007669"/>
    <property type="project" value="UniProtKB-SubCell"/>
</dbReference>
<dbReference type="GO" id="GO:0000310">
    <property type="term" value="F:xanthine phosphoribosyltransferase activity"/>
    <property type="evidence" value="ECO:0007669"/>
    <property type="project" value="UniProtKB-UniRule"/>
</dbReference>
<dbReference type="GO" id="GO:0006166">
    <property type="term" value="P:purine ribonucleoside salvage"/>
    <property type="evidence" value="ECO:0007669"/>
    <property type="project" value="UniProtKB-KW"/>
</dbReference>
<dbReference type="GO" id="GO:0046110">
    <property type="term" value="P:xanthine metabolic process"/>
    <property type="evidence" value="ECO:0007669"/>
    <property type="project" value="InterPro"/>
</dbReference>
<dbReference type="GO" id="GO:0032265">
    <property type="term" value="P:XMP salvage"/>
    <property type="evidence" value="ECO:0007669"/>
    <property type="project" value="UniProtKB-UniRule"/>
</dbReference>
<dbReference type="CDD" id="cd06223">
    <property type="entry name" value="PRTases_typeI"/>
    <property type="match status" value="1"/>
</dbReference>
<dbReference type="FunFam" id="3.40.50.2020:FF:000027">
    <property type="entry name" value="Xanthine phosphoribosyltransferase"/>
    <property type="match status" value="1"/>
</dbReference>
<dbReference type="Gene3D" id="3.40.50.2020">
    <property type="match status" value="1"/>
</dbReference>
<dbReference type="HAMAP" id="MF_01184">
    <property type="entry name" value="XPRTase"/>
    <property type="match status" value="1"/>
</dbReference>
<dbReference type="InterPro" id="IPR000836">
    <property type="entry name" value="PRibTrfase_dom"/>
</dbReference>
<dbReference type="InterPro" id="IPR029057">
    <property type="entry name" value="PRTase-like"/>
</dbReference>
<dbReference type="InterPro" id="IPR050118">
    <property type="entry name" value="Pur/Pyrimidine_PRTase"/>
</dbReference>
<dbReference type="InterPro" id="IPR010079">
    <property type="entry name" value="Xanthine_PRibTrfase"/>
</dbReference>
<dbReference type="NCBIfam" id="NF006671">
    <property type="entry name" value="PRK09219.1"/>
    <property type="match status" value="1"/>
</dbReference>
<dbReference type="NCBIfam" id="TIGR01744">
    <property type="entry name" value="XPRTase"/>
    <property type="match status" value="1"/>
</dbReference>
<dbReference type="PANTHER" id="PTHR43864">
    <property type="entry name" value="HYPOXANTHINE/GUANINE PHOSPHORIBOSYLTRANSFERASE"/>
    <property type="match status" value="1"/>
</dbReference>
<dbReference type="PANTHER" id="PTHR43864:SF1">
    <property type="entry name" value="XANTHINE PHOSPHORIBOSYLTRANSFERASE"/>
    <property type="match status" value="1"/>
</dbReference>
<dbReference type="Pfam" id="PF00156">
    <property type="entry name" value="Pribosyltran"/>
    <property type="match status" value="1"/>
</dbReference>
<dbReference type="SUPFAM" id="SSF53271">
    <property type="entry name" value="PRTase-like"/>
    <property type="match status" value="1"/>
</dbReference>
<proteinExistence type="inferred from homology"/>
<comment type="function">
    <text evidence="1">Converts the preformed base xanthine, a product of nucleic acid breakdown, to xanthosine 5'-monophosphate (XMP), so it can be reused for RNA or DNA synthesis.</text>
</comment>
<comment type="catalytic activity">
    <reaction evidence="1">
        <text>XMP + diphosphate = xanthine + 5-phospho-alpha-D-ribose 1-diphosphate</text>
        <dbReference type="Rhea" id="RHEA:10800"/>
        <dbReference type="ChEBI" id="CHEBI:17712"/>
        <dbReference type="ChEBI" id="CHEBI:33019"/>
        <dbReference type="ChEBI" id="CHEBI:57464"/>
        <dbReference type="ChEBI" id="CHEBI:58017"/>
        <dbReference type="EC" id="2.4.2.22"/>
    </reaction>
</comment>
<comment type="pathway">
    <text evidence="1">Purine metabolism; XMP biosynthesis via salvage pathway; XMP from xanthine: step 1/1.</text>
</comment>
<comment type="subunit">
    <text evidence="1">Homodimer.</text>
</comment>
<comment type="subcellular location">
    <subcellularLocation>
        <location evidence="1">Cytoplasm</location>
    </subcellularLocation>
</comment>
<comment type="similarity">
    <text evidence="1">Belongs to the purine/pyrimidine phosphoribosyltransferase family. Xpt subfamily.</text>
</comment>
<gene>
    <name evidence="1" type="primary">xpt</name>
    <name type="ordered locus">lin1998</name>
</gene>
<sequence>MKLLEEFIQEKGTVLPGNVLKVDAFLNHQIDPGLMQEMGKAFAERFKDLGITKIVTIESSGIAPAVFAGLALSVPVVFARKKKSVTLTDNLYTSTVYSYTKKKSNDISVSKQFLTDADTILVIDDFLANGQAALGLLEIAELAGAKVAGIGIVIEKSFQQGRELLNKTGIPVYSLARIASLENEEILFLEEE</sequence>
<organism>
    <name type="scientific">Listeria innocua serovar 6a (strain ATCC BAA-680 / CLIP 11262)</name>
    <dbReference type="NCBI Taxonomy" id="272626"/>
    <lineage>
        <taxon>Bacteria</taxon>
        <taxon>Bacillati</taxon>
        <taxon>Bacillota</taxon>
        <taxon>Bacilli</taxon>
        <taxon>Bacillales</taxon>
        <taxon>Listeriaceae</taxon>
        <taxon>Listeria</taxon>
    </lineage>
</organism>
<name>XPT_LISIN</name>
<evidence type="ECO:0000255" key="1">
    <source>
        <dbReference type="HAMAP-Rule" id="MF_01184"/>
    </source>
</evidence>
<feature type="chain" id="PRO_0000339717" description="Xanthine phosphoribosyltransferase">
    <location>
        <begin position="1"/>
        <end position="192"/>
    </location>
</feature>
<feature type="binding site" evidence="1">
    <location>
        <position position="20"/>
    </location>
    <ligand>
        <name>xanthine</name>
        <dbReference type="ChEBI" id="CHEBI:17712"/>
    </ligand>
</feature>
<feature type="binding site" evidence="1">
    <location>
        <position position="27"/>
    </location>
    <ligand>
        <name>xanthine</name>
        <dbReference type="ChEBI" id="CHEBI:17712"/>
    </ligand>
</feature>
<feature type="binding site" evidence="1">
    <location>
        <begin position="128"/>
        <end position="132"/>
    </location>
    <ligand>
        <name>5-phospho-alpha-D-ribose 1-diphosphate</name>
        <dbReference type="ChEBI" id="CHEBI:58017"/>
    </ligand>
</feature>
<feature type="binding site" evidence="1">
    <location>
        <position position="156"/>
    </location>
    <ligand>
        <name>xanthine</name>
        <dbReference type="ChEBI" id="CHEBI:17712"/>
    </ligand>
</feature>
<keyword id="KW-0963">Cytoplasm</keyword>
<keyword id="KW-0328">Glycosyltransferase</keyword>
<keyword id="KW-0660">Purine salvage</keyword>
<keyword id="KW-0808">Transferase</keyword>
<protein>
    <recommendedName>
        <fullName evidence="1">Xanthine phosphoribosyltransferase</fullName>
        <shortName evidence="1">XPRTase</shortName>
        <ecNumber evidence="1">2.4.2.22</ecNumber>
    </recommendedName>
</protein>
<reference key="1">
    <citation type="journal article" date="2001" name="Science">
        <title>Comparative genomics of Listeria species.</title>
        <authorList>
            <person name="Glaser P."/>
            <person name="Frangeul L."/>
            <person name="Buchrieser C."/>
            <person name="Rusniok C."/>
            <person name="Amend A."/>
            <person name="Baquero F."/>
            <person name="Berche P."/>
            <person name="Bloecker H."/>
            <person name="Brandt P."/>
            <person name="Chakraborty T."/>
            <person name="Charbit A."/>
            <person name="Chetouani F."/>
            <person name="Couve E."/>
            <person name="de Daruvar A."/>
            <person name="Dehoux P."/>
            <person name="Domann E."/>
            <person name="Dominguez-Bernal G."/>
            <person name="Duchaud E."/>
            <person name="Durant L."/>
            <person name="Dussurget O."/>
            <person name="Entian K.-D."/>
            <person name="Fsihi H."/>
            <person name="Garcia-del Portillo F."/>
            <person name="Garrido P."/>
            <person name="Gautier L."/>
            <person name="Goebel W."/>
            <person name="Gomez-Lopez N."/>
            <person name="Hain T."/>
            <person name="Hauf J."/>
            <person name="Jackson D."/>
            <person name="Jones L.-M."/>
            <person name="Kaerst U."/>
            <person name="Kreft J."/>
            <person name="Kuhn M."/>
            <person name="Kunst F."/>
            <person name="Kurapkat G."/>
            <person name="Madueno E."/>
            <person name="Maitournam A."/>
            <person name="Mata Vicente J."/>
            <person name="Ng E."/>
            <person name="Nedjari H."/>
            <person name="Nordsiek G."/>
            <person name="Novella S."/>
            <person name="de Pablos B."/>
            <person name="Perez-Diaz J.-C."/>
            <person name="Purcell R."/>
            <person name="Remmel B."/>
            <person name="Rose M."/>
            <person name="Schlueter T."/>
            <person name="Simoes N."/>
            <person name="Tierrez A."/>
            <person name="Vazquez-Boland J.-A."/>
            <person name="Voss H."/>
            <person name="Wehland J."/>
            <person name="Cossart P."/>
        </authorList>
    </citation>
    <scope>NUCLEOTIDE SEQUENCE [LARGE SCALE GENOMIC DNA]</scope>
    <source>
        <strain>ATCC BAA-680 / CLIP 11262</strain>
    </source>
</reference>
<accession>Q92AC4</accession>